<accession>Q215T1</accession>
<keyword id="KW-0963">Cytoplasm</keyword>
<keyword id="KW-0275">Fatty acid biosynthesis</keyword>
<keyword id="KW-0276">Fatty acid metabolism</keyword>
<keyword id="KW-0444">Lipid biosynthesis</keyword>
<keyword id="KW-0443">Lipid metabolism</keyword>
<keyword id="KW-0596">Phosphopantetheine</keyword>
<keyword id="KW-0597">Phosphoprotein</keyword>
<feature type="chain" id="PRO_1000066675" description="Acyl carrier protein">
    <location>
        <begin position="1"/>
        <end position="79"/>
    </location>
</feature>
<feature type="domain" description="Carrier" evidence="2">
    <location>
        <begin position="2"/>
        <end position="77"/>
    </location>
</feature>
<feature type="modified residue" description="O-(pantetheine 4'-phosphoryl)serine" evidence="2">
    <location>
        <position position="37"/>
    </location>
</feature>
<reference key="1">
    <citation type="submission" date="2006-03" db="EMBL/GenBank/DDBJ databases">
        <title>Complete sequence of Rhodopseudomonas palustris BisB18.</title>
        <authorList>
            <consortium name="US DOE Joint Genome Institute"/>
            <person name="Copeland A."/>
            <person name="Lucas S."/>
            <person name="Lapidus A."/>
            <person name="Barry K."/>
            <person name="Detter J.C."/>
            <person name="Glavina del Rio T."/>
            <person name="Hammon N."/>
            <person name="Israni S."/>
            <person name="Dalin E."/>
            <person name="Tice H."/>
            <person name="Pitluck S."/>
            <person name="Chain P."/>
            <person name="Malfatti S."/>
            <person name="Shin M."/>
            <person name="Vergez L."/>
            <person name="Schmutz J."/>
            <person name="Larimer F."/>
            <person name="Land M."/>
            <person name="Hauser L."/>
            <person name="Pelletier D.A."/>
            <person name="Kyrpides N."/>
            <person name="Anderson I."/>
            <person name="Oda Y."/>
            <person name="Harwood C.S."/>
            <person name="Richardson P."/>
        </authorList>
    </citation>
    <scope>NUCLEOTIDE SEQUENCE [LARGE SCALE GENOMIC DNA]</scope>
    <source>
        <strain>BisB18</strain>
    </source>
</reference>
<dbReference type="EMBL" id="CP000301">
    <property type="protein sequence ID" value="ABD87855.1"/>
    <property type="molecule type" value="Genomic_DNA"/>
</dbReference>
<dbReference type="SMR" id="Q215T1"/>
<dbReference type="STRING" id="316056.RPC_2301"/>
<dbReference type="KEGG" id="rpc:RPC_2301"/>
<dbReference type="eggNOG" id="COG0236">
    <property type="taxonomic scope" value="Bacteria"/>
</dbReference>
<dbReference type="HOGENOM" id="CLU_108696_5_1_5"/>
<dbReference type="OrthoDB" id="9804551at2"/>
<dbReference type="UniPathway" id="UPA00094"/>
<dbReference type="GO" id="GO:0005829">
    <property type="term" value="C:cytosol"/>
    <property type="evidence" value="ECO:0007669"/>
    <property type="project" value="TreeGrafter"/>
</dbReference>
<dbReference type="GO" id="GO:0016020">
    <property type="term" value="C:membrane"/>
    <property type="evidence" value="ECO:0007669"/>
    <property type="project" value="GOC"/>
</dbReference>
<dbReference type="GO" id="GO:0000035">
    <property type="term" value="F:acyl binding"/>
    <property type="evidence" value="ECO:0007669"/>
    <property type="project" value="TreeGrafter"/>
</dbReference>
<dbReference type="GO" id="GO:0000036">
    <property type="term" value="F:acyl carrier activity"/>
    <property type="evidence" value="ECO:0007669"/>
    <property type="project" value="UniProtKB-UniRule"/>
</dbReference>
<dbReference type="GO" id="GO:0031177">
    <property type="term" value="F:phosphopantetheine binding"/>
    <property type="evidence" value="ECO:0007669"/>
    <property type="project" value="InterPro"/>
</dbReference>
<dbReference type="GO" id="GO:0009245">
    <property type="term" value="P:lipid A biosynthetic process"/>
    <property type="evidence" value="ECO:0007669"/>
    <property type="project" value="TreeGrafter"/>
</dbReference>
<dbReference type="FunFam" id="1.10.1200.10:FF:000012">
    <property type="entry name" value="Acyl carrier protein"/>
    <property type="match status" value="1"/>
</dbReference>
<dbReference type="Gene3D" id="1.10.1200.10">
    <property type="entry name" value="ACP-like"/>
    <property type="match status" value="1"/>
</dbReference>
<dbReference type="HAMAP" id="MF_01217">
    <property type="entry name" value="Acyl_carrier"/>
    <property type="match status" value="1"/>
</dbReference>
<dbReference type="InterPro" id="IPR003231">
    <property type="entry name" value="ACP"/>
</dbReference>
<dbReference type="InterPro" id="IPR036736">
    <property type="entry name" value="ACP-like_sf"/>
</dbReference>
<dbReference type="InterPro" id="IPR020806">
    <property type="entry name" value="PKS_PP-bd"/>
</dbReference>
<dbReference type="InterPro" id="IPR009081">
    <property type="entry name" value="PP-bd_ACP"/>
</dbReference>
<dbReference type="InterPro" id="IPR006162">
    <property type="entry name" value="Ppantetheine_attach_site"/>
</dbReference>
<dbReference type="NCBIfam" id="TIGR00517">
    <property type="entry name" value="acyl_carrier"/>
    <property type="match status" value="1"/>
</dbReference>
<dbReference type="NCBIfam" id="NF002148">
    <property type="entry name" value="PRK00982.1-2"/>
    <property type="match status" value="1"/>
</dbReference>
<dbReference type="NCBIfam" id="NF002149">
    <property type="entry name" value="PRK00982.1-3"/>
    <property type="match status" value="1"/>
</dbReference>
<dbReference type="NCBIfam" id="NF002150">
    <property type="entry name" value="PRK00982.1-4"/>
    <property type="match status" value="1"/>
</dbReference>
<dbReference type="NCBIfam" id="NF002151">
    <property type="entry name" value="PRK00982.1-5"/>
    <property type="match status" value="1"/>
</dbReference>
<dbReference type="PANTHER" id="PTHR20863">
    <property type="entry name" value="ACYL CARRIER PROTEIN"/>
    <property type="match status" value="1"/>
</dbReference>
<dbReference type="PANTHER" id="PTHR20863:SF76">
    <property type="entry name" value="CARRIER DOMAIN-CONTAINING PROTEIN"/>
    <property type="match status" value="1"/>
</dbReference>
<dbReference type="Pfam" id="PF00550">
    <property type="entry name" value="PP-binding"/>
    <property type="match status" value="1"/>
</dbReference>
<dbReference type="SMART" id="SM00823">
    <property type="entry name" value="PKS_PP"/>
    <property type="match status" value="1"/>
</dbReference>
<dbReference type="SUPFAM" id="SSF47336">
    <property type="entry name" value="ACP-like"/>
    <property type="match status" value="1"/>
</dbReference>
<dbReference type="PROSITE" id="PS50075">
    <property type="entry name" value="CARRIER"/>
    <property type="match status" value="1"/>
</dbReference>
<dbReference type="PROSITE" id="PS00012">
    <property type="entry name" value="PHOSPHOPANTETHEINE"/>
    <property type="match status" value="1"/>
</dbReference>
<gene>
    <name evidence="1" type="primary">acpP</name>
    <name type="ordered locus">RPC_2301</name>
</gene>
<comment type="function">
    <text evidence="1">Carrier of the growing fatty acid chain in fatty acid biosynthesis.</text>
</comment>
<comment type="pathway">
    <text evidence="1">Lipid metabolism; fatty acid biosynthesis.</text>
</comment>
<comment type="subcellular location">
    <subcellularLocation>
        <location evidence="1">Cytoplasm</location>
    </subcellularLocation>
</comment>
<comment type="PTM">
    <text evidence="1">4'-phosphopantetheine is transferred from CoA to a specific serine of apo-ACP by AcpS. This modification is essential for activity because fatty acids are bound in thioester linkage to the sulfhydryl of the prosthetic group.</text>
</comment>
<comment type="similarity">
    <text evidence="1">Belongs to the acyl carrier protein (ACP) family.</text>
</comment>
<name>ACP_RHOPB</name>
<proteinExistence type="inferred from homology"/>
<organism>
    <name type="scientific">Rhodopseudomonas palustris (strain BisB18)</name>
    <dbReference type="NCBI Taxonomy" id="316056"/>
    <lineage>
        <taxon>Bacteria</taxon>
        <taxon>Pseudomonadati</taxon>
        <taxon>Pseudomonadota</taxon>
        <taxon>Alphaproteobacteria</taxon>
        <taxon>Hyphomicrobiales</taxon>
        <taxon>Nitrobacteraceae</taxon>
        <taxon>Rhodopseudomonas</taxon>
    </lineage>
</organism>
<sequence>MSEIGERVKKIVVEHLGVEPEKVVDGASFIDDLGADSLDTVELVMAFEEEFGCEIPDDAAETILTVGDATKFLEKNAKS</sequence>
<protein>
    <recommendedName>
        <fullName evidence="1">Acyl carrier protein</fullName>
        <shortName evidence="1">ACP</shortName>
    </recommendedName>
</protein>
<evidence type="ECO:0000255" key="1">
    <source>
        <dbReference type="HAMAP-Rule" id="MF_01217"/>
    </source>
</evidence>
<evidence type="ECO:0000255" key="2">
    <source>
        <dbReference type="PROSITE-ProRule" id="PRU00258"/>
    </source>
</evidence>